<sequence length="273" mass="29820">MAVVKCKPTSPGRRHVVKVVNPELHKGKPFAPLVEKNSKSGGRNNNGRITTRHIGGGHKQAYRIVDFKRNKDGIPAVVERLEYDPNRSANIALVLYKDGERRYILAPKGLKAGDQIQSGVDAAIKAGNTLPMRNIPVGSTVHNVEMKPGKGGQLARSAGTYVQIVARDGAYVTLRLRSGEMRKVEADCRATLGEVGNAEHMLRVLGKAGAARWRGVRPTVRGTAMNPVDHPHGGGEGRNFGKHPVTPWGVQTKGKKTRSNKRTDKFIVRRRSK</sequence>
<feature type="chain" id="PRO_0000129610" description="Large ribosomal subunit protein uL2">
    <location>
        <begin position="1"/>
        <end position="273"/>
    </location>
</feature>
<feature type="region of interest" description="Disordered" evidence="2">
    <location>
        <begin position="28"/>
        <end position="53"/>
    </location>
</feature>
<feature type="region of interest" description="Disordered" evidence="2">
    <location>
        <begin position="221"/>
        <end position="273"/>
    </location>
</feature>
<feature type="compositionally biased region" description="Low complexity" evidence="2">
    <location>
        <begin position="39"/>
        <end position="48"/>
    </location>
</feature>
<dbReference type="EMBL" id="AE006468">
    <property type="protein sequence ID" value="AAL22300.1"/>
    <property type="molecule type" value="Genomic_DNA"/>
</dbReference>
<dbReference type="RefSeq" id="NP_462341.1">
    <property type="nucleotide sequence ID" value="NC_003197.2"/>
</dbReference>
<dbReference type="RefSeq" id="WP_000301869.1">
    <property type="nucleotide sequence ID" value="NC_003197.2"/>
</dbReference>
<dbReference type="SMR" id="P60428"/>
<dbReference type="STRING" id="99287.STM3437"/>
<dbReference type="PaxDb" id="99287-STM3437"/>
<dbReference type="GeneID" id="1254960"/>
<dbReference type="GeneID" id="97393170"/>
<dbReference type="KEGG" id="stm:STM3437"/>
<dbReference type="PATRIC" id="fig|99287.12.peg.3634"/>
<dbReference type="HOGENOM" id="CLU_036235_2_1_6"/>
<dbReference type="OMA" id="GGRHPCT"/>
<dbReference type="PhylomeDB" id="P60428"/>
<dbReference type="BioCyc" id="SENT99287:STM3437-MONOMER"/>
<dbReference type="Proteomes" id="UP000001014">
    <property type="component" value="Chromosome"/>
</dbReference>
<dbReference type="GO" id="GO:0022625">
    <property type="term" value="C:cytosolic large ribosomal subunit"/>
    <property type="evidence" value="ECO:0000318"/>
    <property type="project" value="GO_Central"/>
</dbReference>
<dbReference type="GO" id="GO:0003723">
    <property type="term" value="F:RNA binding"/>
    <property type="evidence" value="ECO:0000318"/>
    <property type="project" value="GO_Central"/>
</dbReference>
<dbReference type="GO" id="GO:0019843">
    <property type="term" value="F:rRNA binding"/>
    <property type="evidence" value="ECO:0007669"/>
    <property type="project" value="UniProtKB-UniRule"/>
</dbReference>
<dbReference type="GO" id="GO:0003735">
    <property type="term" value="F:structural constituent of ribosome"/>
    <property type="evidence" value="ECO:0000318"/>
    <property type="project" value="GO_Central"/>
</dbReference>
<dbReference type="GO" id="GO:0016740">
    <property type="term" value="F:transferase activity"/>
    <property type="evidence" value="ECO:0007669"/>
    <property type="project" value="InterPro"/>
</dbReference>
<dbReference type="GO" id="GO:0002181">
    <property type="term" value="P:cytoplasmic translation"/>
    <property type="evidence" value="ECO:0000318"/>
    <property type="project" value="GO_Central"/>
</dbReference>
<dbReference type="FunFam" id="2.30.30.30:FF:000001">
    <property type="entry name" value="50S ribosomal protein L2"/>
    <property type="match status" value="1"/>
</dbReference>
<dbReference type="FunFam" id="2.40.50.140:FF:000003">
    <property type="entry name" value="50S ribosomal protein L2"/>
    <property type="match status" value="1"/>
</dbReference>
<dbReference type="FunFam" id="4.10.950.10:FF:000001">
    <property type="entry name" value="50S ribosomal protein L2"/>
    <property type="match status" value="1"/>
</dbReference>
<dbReference type="Gene3D" id="2.30.30.30">
    <property type="match status" value="1"/>
</dbReference>
<dbReference type="Gene3D" id="2.40.50.140">
    <property type="entry name" value="Nucleic acid-binding proteins"/>
    <property type="match status" value="1"/>
</dbReference>
<dbReference type="Gene3D" id="4.10.950.10">
    <property type="entry name" value="Ribosomal protein L2, domain 3"/>
    <property type="match status" value="1"/>
</dbReference>
<dbReference type="HAMAP" id="MF_01320_B">
    <property type="entry name" value="Ribosomal_uL2_B"/>
    <property type="match status" value="1"/>
</dbReference>
<dbReference type="InterPro" id="IPR012340">
    <property type="entry name" value="NA-bd_OB-fold"/>
</dbReference>
<dbReference type="InterPro" id="IPR014722">
    <property type="entry name" value="Rib_uL2_dom2"/>
</dbReference>
<dbReference type="InterPro" id="IPR002171">
    <property type="entry name" value="Ribosomal_uL2"/>
</dbReference>
<dbReference type="InterPro" id="IPR005880">
    <property type="entry name" value="Ribosomal_uL2_bac/org-type"/>
</dbReference>
<dbReference type="InterPro" id="IPR022669">
    <property type="entry name" value="Ribosomal_uL2_C"/>
</dbReference>
<dbReference type="InterPro" id="IPR022671">
    <property type="entry name" value="Ribosomal_uL2_CS"/>
</dbReference>
<dbReference type="InterPro" id="IPR014726">
    <property type="entry name" value="Ribosomal_uL2_dom3"/>
</dbReference>
<dbReference type="InterPro" id="IPR022666">
    <property type="entry name" value="Ribosomal_uL2_RNA-bd_dom"/>
</dbReference>
<dbReference type="InterPro" id="IPR008991">
    <property type="entry name" value="Translation_prot_SH3-like_sf"/>
</dbReference>
<dbReference type="NCBIfam" id="TIGR01171">
    <property type="entry name" value="rplB_bact"/>
    <property type="match status" value="1"/>
</dbReference>
<dbReference type="PANTHER" id="PTHR13691:SF5">
    <property type="entry name" value="LARGE RIBOSOMAL SUBUNIT PROTEIN UL2M"/>
    <property type="match status" value="1"/>
</dbReference>
<dbReference type="PANTHER" id="PTHR13691">
    <property type="entry name" value="RIBOSOMAL PROTEIN L2"/>
    <property type="match status" value="1"/>
</dbReference>
<dbReference type="Pfam" id="PF00181">
    <property type="entry name" value="Ribosomal_L2"/>
    <property type="match status" value="1"/>
</dbReference>
<dbReference type="Pfam" id="PF03947">
    <property type="entry name" value="Ribosomal_L2_C"/>
    <property type="match status" value="1"/>
</dbReference>
<dbReference type="PIRSF" id="PIRSF002158">
    <property type="entry name" value="Ribosomal_L2"/>
    <property type="match status" value="1"/>
</dbReference>
<dbReference type="SMART" id="SM01383">
    <property type="entry name" value="Ribosomal_L2"/>
    <property type="match status" value="1"/>
</dbReference>
<dbReference type="SMART" id="SM01382">
    <property type="entry name" value="Ribosomal_L2_C"/>
    <property type="match status" value="1"/>
</dbReference>
<dbReference type="SUPFAM" id="SSF50249">
    <property type="entry name" value="Nucleic acid-binding proteins"/>
    <property type="match status" value="1"/>
</dbReference>
<dbReference type="SUPFAM" id="SSF50104">
    <property type="entry name" value="Translation proteins SH3-like domain"/>
    <property type="match status" value="1"/>
</dbReference>
<dbReference type="PROSITE" id="PS00467">
    <property type="entry name" value="RIBOSOMAL_L2"/>
    <property type="match status" value="1"/>
</dbReference>
<name>RL2_SALTY</name>
<comment type="function">
    <text evidence="1">One of the primary rRNA binding proteins. Required for association of the 30S and 50S subunits to form the 70S ribosome, for tRNA binding and peptide bond formation. It has been suggested to have peptidyltransferase activity; this is somewhat controversial. Makes several contacts with the 16S rRNA in the 70S ribosome.</text>
</comment>
<comment type="subunit">
    <text evidence="1">Part of the 50S ribosomal subunit. Forms a bridge to the 30S subunit in the 70S ribosome.</text>
</comment>
<comment type="similarity">
    <text evidence="1">Belongs to the universal ribosomal protein uL2 family.</text>
</comment>
<reference key="1">
    <citation type="journal article" date="2001" name="Nature">
        <title>Complete genome sequence of Salmonella enterica serovar Typhimurium LT2.</title>
        <authorList>
            <person name="McClelland M."/>
            <person name="Sanderson K.E."/>
            <person name="Spieth J."/>
            <person name="Clifton S.W."/>
            <person name="Latreille P."/>
            <person name="Courtney L."/>
            <person name="Porwollik S."/>
            <person name="Ali J."/>
            <person name="Dante M."/>
            <person name="Du F."/>
            <person name="Hou S."/>
            <person name="Layman D."/>
            <person name="Leonard S."/>
            <person name="Nguyen C."/>
            <person name="Scott K."/>
            <person name="Holmes A."/>
            <person name="Grewal N."/>
            <person name="Mulvaney E."/>
            <person name="Ryan E."/>
            <person name="Sun H."/>
            <person name="Florea L."/>
            <person name="Miller W."/>
            <person name="Stoneking T."/>
            <person name="Nhan M."/>
            <person name="Waterston R."/>
            <person name="Wilson R.K."/>
        </authorList>
    </citation>
    <scope>NUCLEOTIDE SEQUENCE [LARGE SCALE GENOMIC DNA]</scope>
    <source>
        <strain>LT2 / SGSC1412 / ATCC 700720</strain>
    </source>
</reference>
<organism>
    <name type="scientific">Salmonella typhimurium (strain LT2 / SGSC1412 / ATCC 700720)</name>
    <dbReference type="NCBI Taxonomy" id="99287"/>
    <lineage>
        <taxon>Bacteria</taxon>
        <taxon>Pseudomonadati</taxon>
        <taxon>Pseudomonadota</taxon>
        <taxon>Gammaproteobacteria</taxon>
        <taxon>Enterobacterales</taxon>
        <taxon>Enterobacteriaceae</taxon>
        <taxon>Salmonella</taxon>
    </lineage>
</organism>
<evidence type="ECO:0000255" key="1">
    <source>
        <dbReference type="HAMAP-Rule" id="MF_01320"/>
    </source>
</evidence>
<evidence type="ECO:0000256" key="2">
    <source>
        <dbReference type="SAM" id="MobiDB-lite"/>
    </source>
</evidence>
<evidence type="ECO:0000305" key="3"/>
<accession>P60428</accession>
<accession>Q8XFX1</accession>
<keyword id="KW-1185">Reference proteome</keyword>
<keyword id="KW-0687">Ribonucleoprotein</keyword>
<keyword id="KW-0689">Ribosomal protein</keyword>
<keyword id="KW-0694">RNA-binding</keyword>
<keyword id="KW-0699">rRNA-binding</keyword>
<protein>
    <recommendedName>
        <fullName evidence="1">Large ribosomal subunit protein uL2</fullName>
    </recommendedName>
    <alternativeName>
        <fullName evidence="3">50S ribosomal protein L2</fullName>
    </alternativeName>
</protein>
<proteinExistence type="inferred from homology"/>
<gene>
    <name evidence="1" type="primary">rplB</name>
    <name type="ordered locus">STM3437</name>
</gene>